<dbReference type="EC" id="3.4.21.53" evidence="1"/>
<dbReference type="EMBL" id="CR382138">
    <property type="protein sequence ID" value="CAG89675.2"/>
    <property type="molecule type" value="Genomic_DNA"/>
</dbReference>
<dbReference type="RefSeq" id="XP_461277.2">
    <property type="nucleotide sequence ID" value="XM_461277.1"/>
</dbReference>
<dbReference type="SMR" id="Q6BKJ4"/>
<dbReference type="FunCoup" id="Q6BKJ4">
    <property type="interactions" value="1044"/>
</dbReference>
<dbReference type="STRING" id="284592.Q6BKJ4"/>
<dbReference type="MEROPS" id="S16.010"/>
<dbReference type="GeneID" id="2904269"/>
<dbReference type="KEGG" id="dha:DEHA2F21450g"/>
<dbReference type="VEuPathDB" id="FungiDB:DEHA2F21450g"/>
<dbReference type="eggNOG" id="KOG2004">
    <property type="taxonomic scope" value="Eukaryota"/>
</dbReference>
<dbReference type="HOGENOM" id="CLU_004109_1_0_1"/>
<dbReference type="InParanoid" id="Q6BKJ4"/>
<dbReference type="OMA" id="VEWYQEV"/>
<dbReference type="OrthoDB" id="2411602at2759"/>
<dbReference type="Proteomes" id="UP000000599">
    <property type="component" value="Chromosome F"/>
</dbReference>
<dbReference type="GO" id="GO:0005759">
    <property type="term" value="C:mitochondrial matrix"/>
    <property type="evidence" value="ECO:0007669"/>
    <property type="project" value="UniProtKB-SubCell"/>
</dbReference>
<dbReference type="GO" id="GO:0005524">
    <property type="term" value="F:ATP binding"/>
    <property type="evidence" value="ECO:0007669"/>
    <property type="project" value="UniProtKB-UniRule"/>
</dbReference>
<dbReference type="GO" id="GO:0016887">
    <property type="term" value="F:ATP hydrolysis activity"/>
    <property type="evidence" value="ECO:0007669"/>
    <property type="project" value="UniProtKB-UniRule"/>
</dbReference>
<dbReference type="GO" id="GO:0004176">
    <property type="term" value="F:ATP-dependent peptidase activity"/>
    <property type="evidence" value="ECO:0007669"/>
    <property type="project" value="UniProtKB-UniRule"/>
</dbReference>
<dbReference type="GO" id="GO:0043565">
    <property type="term" value="F:sequence-specific DNA binding"/>
    <property type="evidence" value="ECO:0007669"/>
    <property type="project" value="UniProtKB-UniRule"/>
</dbReference>
<dbReference type="GO" id="GO:0004252">
    <property type="term" value="F:serine-type endopeptidase activity"/>
    <property type="evidence" value="ECO:0007669"/>
    <property type="project" value="UniProtKB-UniRule"/>
</dbReference>
<dbReference type="GO" id="GO:0003697">
    <property type="term" value="F:single-stranded DNA binding"/>
    <property type="evidence" value="ECO:0007669"/>
    <property type="project" value="TreeGrafter"/>
</dbReference>
<dbReference type="GO" id="GO:0034599">
    <property type="term" value="P:cellular response to oxidative stress"/>
    <property type="evidence" value="ECO:0007669"/>
    <property type="project" value="UniProtKB-UniRule"/>
</dbReference>
<dbReference type="GO" id="GO:0051131">
    <property type="term" value="P:chaperone-mediated protein complex assembly"/>
    <property type="evidence" value="ECO:0007669"/>
    <property type="project" value="UniProtKB-UniRule"/>
</dbReference>
<dbReference type="GO" id="GO:0007005">
    <property type="term" value="P:mitochondrion organization"/>
    <property type="evidence" value="ECO:0007669"/>
    <property type="project" value="TreeGrafter"/>
</dbReference>
<dbReference type="GO" id="GO:0070407">
    <property type="term" value="P:oxidation-dependent protein catabolic process"/>
    <property type="evidence" value="ECO:0007669"/>
    <property type="project" value="UniProtKB-UniRule"/>
</dbReference>
<dbReference type="GO" id="GO:0006515">
    <property type="term" value="P:protein quality control for misfolded or incompletely synthesized proteins"/>
    <property type="evidence" value="ECO:0007669"/>
    <property type="project" value="UniProtKB-UniRule"/>
</dbReference>
<dbReference type="CDD" id="cd19500">
    <property type="entry name" value="RecA-like_Lon"/>
    <property type="match status" value="1"/>
</dbReference>
<dbReference type="FunFam" id="3.40.50.300:FF:000021">
    <property type="entry name" value="Lon protease homolog"/>
    <property type="match status" value="1"/>
</dbReference>
<dbReference type="Gene3D" id="1.10.8.60">
    <property type="match status" value="1"/>
</dbReference>
<dbReference type="Gene3D" id="1.20.5.5270">
    <property type="match status" value="1"/>
</dbReference>
<dbReference type="Gene3D" id="1.20.58.1480">
    <property type="match status" value="1"/>
</dbReference>
<dbReference type="Gene3D" id="3.30.230.10">
    <property type="match status" value="1"/>
</dbReference>
<dbReference type="Gene3D" id="2.30.130.40">
    <property type="entry name" value="LON domain-like"/>
    <property type="match status" value="1"/>
</dbReference>
<dbReference type="Gene3D" id="3.40.50.300">
    <property type="entry name" value="P-loop containing nucleotide triphosphate hydrolases"/>
    <property type="match status" value="1"/>
</dbReference>
<dbReference type="HAMAP" id="MF_03120">
    <property type="entry name" value="lonm_euk"/>
    <property type="match status" value="1"/>
</dbReference>
<dbReference type="InterPro" id="IPR003593">
    <property type="entry name" value="AAA+_ATPase"/>
</dbReference>
<dbReference type="InterPro" id="IPR003959">
    <property type="entry name" value="ATPase_AAA_core"/>
</dbReference>
<dbReference type="InterPro" id="IPR004815">
    <property type="entry name" value="Lon_bac/euk-typ"/>
</dbReference>
<dbReference type="InterPro" id="IPR054594">
    <property type="entry name" value="Lon_lid"/>
</dbReference>
<dbReference type="InterPro" id="IPR008269">
    <property type="entry name" value="Lon_proteolytic"/>
</dbReference>
<dbReference type="InterPro" id="IPR027065">
    <property type="entry name" value="Lon_Prtase"/>
</dbReference>
<dbReference type="InterPro" id="IPR003111">
    <property type="entry name" value="Lon_prtase_N"/>
</dbReference>
<dbReference type="InterPro" id="IPR046336">
    <property type="entry name" value="Lon_prtase_N_sf"/>
</dbReference>
<dbReference type="InterPro" id="IPR027503">
    <property type="entry name" value="Lonm_euk"/>
</dbReference>
<dbReference type="InterPro" id="IPR027417">
    <property type="entry name" value="P-loop_NTPase"/>
</dbReference>
<dbReference type="InterPro" id="IPR015947">
    <property type="entry name" value="PUA-like_sf"/>
</dbReference>
<dbReference type="InterPro" id="IPR020568">
    <property type="entry name" value="Ribosomal_Su5_D2-typ_SF"/>
</dbReference>
<dbReference type="InterPro" id="IPR014721">
    <property type="entry name" value="Ribsml_uS5_D2-typ_fold_subgr"/>
</dbReference>
<dbReference type="NCBIfam" id="TIGR00763">
    <property type="entry name" value="lon"/>
    <property type="match status" value="1"/>
</dbReference>
<dbReference type="PANTHER" id="PTHR43718">
    <property type="entry name" value="LON PROTEASE"/>
    <property type="match status" value="1"/>
</dbReference>
<dbReference type="PANTHER" id="PTHR43718:SF2">
    <property type="entry name" value="LON PROTEASE HOMOLOG, MITOCHONDRIAL"/>
    <property type="match status" value="1"/>
</dbReference>
<dbReference type="Pfam" id="PF00004">
    <property type="entry name" value="AAA"/>
    <property type="match status" value="1"/>
</dbReference>
<dbReference type="Pfam" id="PF05362">
    <property type="entry name" value="Lon_C"/>
    <property type="match status" value="1"/>
</dbReference>
<dbReference type="Pfam" id="PF22667">
    <property type="entry name" value="Lon_lid"/>
    <property type="match status" value="1"/>
</dbReference>
<dbReference type="Pfam" id="PF02190">
    <property type="entry name" value="LON_substr_bdg"/>
    <property type="match status" value="1"/>
</dbReference>
<dbReference type="PRINTS" id="PR00830">
    <property type="entry name" value="ENDOLAPTASE"/>
</dbReference>
<dbReference type="SMART" id="SM00382">
    <property type="entry name" value="AAA"/>
    <property type="match status" value="1"/>
</dbReference>
<dbReference type="SMART" id="SM00464">
    <property type="entry name" value="LON"/>
    <property type="match status" value="1"/>
</dbReference>
<dbReference type="SUPFAM" id="SSF52540">
    <property type="entry name" value="P-loop containing nucleoside triphosphate hydrolases"/>
    <property type="match status" value="1"/>
</dbReference>
<dbReference type="SUPFAM" id="SSF88697">
    <property type="entry name" value="PUA domain-like"/>
    <property type="match status" value="1"/>
</dbReference>
<dbReference type="SUPFAM" id="SSF54211">
    <property type="entry name" value="Ribosomal protein S5 domain 2-like"/>
    <property type="match status" value="1"/>
</dbReference>
<dbReference type="PROSITE" id="PS51787">
    <property type="entry name" value="LON_N"/>
    <property type="match status" value="1"/>
</dbReference>
<dbReference type="PROSITE" id="PS51786">
    <property type="entry name" value="LON_PROTEOLYTIC"/>
    <property type="match status" value="1"/>
</dbReference>
<proteinExistence type="inferred from homology"/>
<comment type="function">
    <text evidence="1">ATP-dependent serine protease that mediates the selective degradation of misfolded, unassembled or oxidatively damaged polypeptides as well as certain short-lived regulatory proteins in the mitochondrial matrix. May also have a chaperone function in the assembly of inner membrane protein complexes. Participates in the regulation of mitochondrial gene expression and in the maintenance of the integrity of the mitochondrial genome. Binds to mitochondrial DNA in a site-specific manner.</text>
</comment>
<comment type="catalytic activity">
    <reaction evidence="1">
        <text>Hydrolysis of proteins in presence of ATP.</text>
        <dbReference type="EC" id="3.4.21.53"/>
    </reaction>
</comment>
<comment type="subunit">
    <text evidence="1">Homohexamer or homoheptamer. Organized in a ring with a central cavity.</text>
</comment>
<comment type="subcellular location">
    <subcellularLocation>
        <location evidence="1">Mitochondrion matrix</location>
    </subcellularLocation>
</comment>
<comment type="similarity">
    <text evidence="1">Belongs to the peptidase S16 family.</text>
</comment>
<keyword id="KW-0067">ATP-binding</keyword>
<keyword id="KW-0238">DNA-binding</keyword>
<keyword id="KW-0378">Hydrolase</keyword>
<keyword id="KW-0496">Mitochondrion</keyword>
<keyword id="KW-0547">Nucleotide-binding</keyword>
<keyword id="KW-0645">Protease</keyword>
<keyword id="KW-1185">Reference proteome</keyword>
<keyword id="KW-0720">Serine protease</keyword>
<keyword id="KW-0809">Transit peptide</keyword>
<name>LONM_DEBHA</name>
<gene>
    <name evidence="1" type="primary">PIM1</name>
    <name type="ordered locus">DEHA2F21450g</name>
</gene>
<accession>Q6BKJ4</accession>
<sequence length="1079" mass="119970">MLRPRTYVRKLAWRCPRKSQLGLRLATSVSSHKSLPLPMNFDISHSQSAFRAYQDIIHRNKSVGDDEPSQRSENENNPSESDKDSNQDPETPKKDKESENDKEPEKEKDIENDNKVSSESNENVTLASSNTGGAAPPNGNNNGDDPDDSNPSLPVDPVTGLYPPLLAIPMKDRPPLPGRPFAINVTDPEVIRSIYTIIDKREPYFVLFHVKDSNEPDTDVINKKDSVYDIGVHCQIIRHTTPRPGVFNVLGYPLERCKLEELTTPSSEKEAKSEEPSKEDAESFPTSYLKGLNVSYATVKPVEDEPYDKSSAEIRSLVESLKTLLSKMGGKNPLEKLQIKEGTDLISDPSKFADFVGSTIHGDPKKIQEILETLNIETRLSRALELLKVELKASLIKESTIHNLSTKADEYQTRLFIKEFIKELQKRAGISESEDKKTSKFDERLKHLKLTEEAMEAYNAEKAKMENQNEHSSELGVSERYLDWLTSIPWGVYSKDHFNIKQAREVLERDHYGLKDVKDRILEFISLGKVSGKVDGKILCLAGPPGTGKTSIAKSIAESLNRKYVRIAMGGIQDVHEVKGHRRTYVGSIPGRIISALKQAKTSNPLMLIDEIDKLDLSRGGGAASAFLEILDPEQNNSFVDNYIDVKVDLSKVLFVCTANYLGNIPAPLRDRMEIIDVSGYTNNEKIEIAKRHLIPEASKKAGLETNHVSITNETISRLIEKYCRESGLRNVKKLITRIFSKASLKIVEEIEAKEALDSSKEKEGVTASSEEANVNSESTKSNTSQAEPVAESSTDISTKSKVASEKIETKEKKETNKENGQSEEDQQPEPKFVIPEDIKLEITPANLKDYVGPEIYTRDRVYEFPPPGVATGLSYSTSGNGDALYIESILTHSIGSGSGVPGMHVTGSLKDVMKESASIAYSFTKSFMAKNYPDNRFFEAADIHVHCPDGAIPKDGPSAGISFTSSLVSLAINESLPPTVAMTGEITVTGRVLPVGGLREKILGAKRYGCDTIIFPKDIENELEEIPDEVKDGVTFIPVEWYQEVFDKIFPNATAQKCNEVWKEEFAKLDSKKKNKKK</sequence>
<reference key="1">
    <citation type="journal article" date="2004" name="Nature">
        <title>Genome evolution in yeasts.</title>
        <authorList>
            <person name="Dujon B."/>
            <person name="Sherman D."/>
            <person name="Fischer G."/>
            <person name="Durrens P."/>
            <person name="Casaregola S."/>
            <person name="Lafontaine I."/>
            <person name="de Montigny J."/>
            <person name="Marck C."/>
            <person name="Neuveglise C."/>
            <person name="Talla E."/>
            <person name="Goffard N."/>
            <person name="Frangeul L."/>
            <person name="Aigle M."/>
            <person name="Anthouard V."/>
            <person name="Babour A."/>
            <person name="Barbe V."/>
            <person name="Barnay S."/>
            <person name="Blanchin S."/>
            <person name="Beckerich J.-M."/>
            <person name="Beyne E."/>
            <person name="Bleykasten C."/>
            <person name="Boisrame A."/>
            <person name="Boyer J."/>
            <person name="Cattolico L."/>
            <person name="Confanioleri F."/>
            <person name="de Daruvar A."/>
            <person name="Despons L."/>
            <person name="Fabre E."/>
            <person name="Fairhead C."/>
            <person name="Ferry-Dumazet H."/>
            <person name="Groppi A."/>
            <person name="Hantraye F."/>
            <person name="Hennequin C."/>
            <person name="Jauniaux N."/>
            <person name="Joyet P."/>
            <person name="Kachouri R."/>
            <person name="Kerrest A."/>
            <person name="Koszul R."/>
            <person name="Lemaire M."/>
            <person name="Lesur I."/>
            <person name="Ma L."/>
            <person name="Muller H."/>
            <person name="Nicaud J.-M."/>
            <person name="Nikolski M."/>
            <person name="Oztas S."/>
            <person name="Ozier-Kalogeropoulos O."/>
            <person name="Pellenz S."/>
            <person name="Potier S."/>
            <person name="Richard G.-F."/>
            <person name="Straub M.-L."/>
            <person name="Suleau A."/>
            <person name="Swennen D."/>
            <person name="Tekaia F."/>
            <person name="Wesolowski-Louvel M."/>
            <person name="Westhof E."/>
            <person name="Wirth B."/>
            <person name="Zeniou-Meyer M."/>
            <person name="Zivanovic Y."/>
            <person name="Bolotin-Fukuhara M."/>
            <person name="Thierry A."/>
            <person name="Bouchier C."/>
            <person name="Caudron B."/>
            <person name="Scarpelli C."/>
            <person name="Gaillardin C."/>
            <person name="Weissenbach J."/>
            <person name="Wincker P."/>
            <person name="Souciet J.-L."/>
        </authorList>
    </citation>
    <scope>NUCLEOTIDE SEQUENCE [LARGE SCALE GENOMIC DNA]</scope>
    <source>
        <strain>ATCC 36239 / CBS 767 / BCRC 21394 / JCM 1990 / NBRC 0083 / IGC 2968</strain>
    </source>
</reference>
<feature type="transit peptide" description="Mitochondrion" evidence="1">
    <location>
        <begin position="1"/>
        <end position="60"/>
    </location>
</feature>
<feature type="chain" id="PRO_0000395778" description="Lon protease homolog, mitochondrial">
    <location>
        <begin position="61"/>
        <end position="1079"/>
    </location>
</feature>
<feature type="domain" description="Lon N-terminal" evidence="3">
    <location>
        <begin position="165"/>
        <end position="391"/>
    </location>
</feature>
<feature type="domain" description="Lon proteolytic" evidence="2">
    <location>
        <begin position="865"/>
        <end position="1053"/>
    </location>
</feature>
<feature type="region of interest" description="Disordered" evidence="4">
    <location>
        <begin position="61"/>
        <end position="158"/>
    </location>
</feature>
<feature type="region of interest" description="Disordered" evidence="4">
    <location>
        <begin position="262"/>
        <end position="285"/>
    </location>
</feature>
<feature type="region of interest" description="Disordered" evidence="4">
    <location>
        <begin position="756"/>
        <end position="832"/>
    </location>
</feature>
<feature type="compositionally biased region" description="Basic and acidic residues" evidence="4">
    <location>
        <begin position="61"/>
        <end position="116"/>
    </location>
</feature>
<feature type="compositionally biased region" description="Polar residues" evidence="4">
    <location>
        <begin position="117"/>
        <end position="131"/>
    </location>
</feature>
<feature type="compositionally biased region" description="Low complexity" evidence="4">
    <location>
        <begin position="132"/>
        <end position="143"/>
    </location>
</feature>
<feature type="compositionally biased region" description="Basic and acidic residues" evidence="4">
    <location>
        <begin position="262"/>
        <end position="281"/>
    </location>
</feature>
<feature type="compositionally biased region" description="Basic and acidic residues" evidence="4">
    <location>
        <begin position="756"/>
        <end position="765"/>
    </location>
</feature>
<feature type="compositionally biased region" description="Low complexity" evidence="4">
    <location>
        <begin position="768"/>
        <end position="779"/>
    </location>
</feature>
<feature type="compositionally biased region" description="Polar residues" evidence="4">
    <location>
        <begin position="780"/>
        <end position="802"/>
    </location>
</feature>
<feature type="compositionally biased region" description="Basic and acidic residues" evidence="4">
    <location>
        <begin position="803"/>
        <end position="818"/>
    </location>
</feature>
<feature type="active site" evidence="1">
    <location>
        <position position="959"/>
    </location>
</feature>
<feature type="active site" evidence="1">
    <location>
        <position position="1002"/>
    </location>
</feature>
<feature type="binding site" evidence="1">
    <location>
        <begin position="543"/>
        <end position="550"/>
    </location>
    <ligand>
        <name>ATP</name>
        <dbReference type="ChEBI" id="CHEBI:30616"/>
    </ligand>
</feature>
<protein>
    <recommendedName>
        <fullName evidence="1">Lon protease homolog, mitochondrial</fullName>
        <ecNumber evidence="1">3.4.21.53</ecNumber>
    </recommendedName>
</protein>
<organism>
    <name type="scientific">Debaryomyces hansenii (strain ATCC 36239 / CBS 767 / BCRC 21394 / JCM 1990 / NBRC 0083 / IGC 2968)</name>
    <name type="common">Yeast</name>
    <name type="synonym">Torulaspora hansenii</name>
    <dbReference type="NCBI Taxonomy" id="284592"/>
    <lineage>
        <taxon>Eukaryota</taxon>
        <taxon>Fungi</taxon>
        <taxon>Dikarya</taxon>
        <taxon>Ascomycota</taxon>
        <taxon>Saccharomycotina</taxon>
        <taxon>Pichiomycetes</taxon>
        <taxon>Debaryomycetaceae</taxon>
        <taxon>Debaryomyces</taxon>
    </lineage>
</organism>
<evidence type="ECO:0000255" key="1">
    <source>
        <dbReference type="HAMAP-Rule" id="MF_03120"/>
    </source>
</evidence>
<evidence type="ECO:0000255" key="2">
    <source>
        <dbReference type="PROSITE-ProRule" id="PRU01122"/>
    </source>
</evidence>
<evidence type="ECO:0000255" key="3">
    <source>
        <dbReference type="PROSITE-ProRule" id="PRU01123"/>
    </source>
</evidence>
<evidence type="ECO:0000256" key="4">
    <source>
        <dbReference type="SAM" id="MobiDB-lite"/>
    </source>
</evidence>